<gene>
    <name type="primary">FRK1</name>
    <name type="ordered locus">YPL141C</name>
</gene>
<organism>
    <name type="scientific">Saccharomyces cerevisiae (strain ATCC 204508 / S288c)</name>
    <name type="common">Baker's yeast</name>
    <dbReference type="NCBI Taxonomy" id="559292"/>
    <lineage>
        <taxon>Eukaryota</taxon>
        <taxon>Fungi</taxon>
        <taxon>Dikarya</taxon>
        <taxon>Ascomycota</taxon>
        <taxon>Saccharomycotina</taxon>
        <taxon>Saccharomycetes</taxon>
        <taxon>Saccharomycetales</taxon>
        <taxon>Saccharomycetaceae</taxon>
        <taxon>Saccharomyces</taxon>
    </lineage>
</organism>
<dbReference type="EC" id="2.7.11.1"/>
<dbReference type="EMBL" id="U43703">
    <property type="protein sequence ID" value="AAB68219.1"/>
    <property type="molecule type" value="Genomic_DNA"/>
</dbReference>
<dbReference type="EMBL" id="BK006949">
    <property type="protein sequence ID" value="DAA11293.1"/>
    <property type="molecule type" value="Genomic_DNA"/>
</dbReference>
<dbReference type="PIR" id="S69044">
    <property type="entry name" value="S69044"/>
</dbReference>
<dbReference type="RefSeq" id="NP_015184.1">
    <property type="nucleotide sequence ID" value="NM_001183955.1"/>
</dbReference>
<dbReference type="SMR" id="Q03002"/>
<dbReference type="BioGRID" id="36041">
    <property type="interactions" value="176"/>
</dbReference>
<dbReference type="FunCoup" id="Q03002">
    <property type="interactions" value="505"/>
</dbReference>
<dbReference type="IntAct" id="Q03002">
    <property type="interactions" value="23"/>
</dbReference>
<dbReference type="MINT" id="Q03002"/>
<dbReference type="STRING" id="4932.YPL141C"/>
<dbReference type="iPTMnet" id="Q03002"/>
<dbReference type="PaxDb" id="4932-YPL141C"/>
<dbReference type="PeptideAtlas" id="Q03002"/>
<dbReference type="EnsemblFungi" id="YPL141C_mRNA">
    <property type="protein sequence ID" value="YPL141C"/>
    <property type="gene ID" value="YPL141C"/>
</dbReference>
<dbReference type="GeneID" id="855962"/>
<dbReference type="KEGG" id="sce:YPL141C"/>
<dbReference type="AGR" id="SGD:S000006062"/>
<dbReference type="SGD" id="S000006062">
    <property type="gene designation" value="FRK1"/>
</dbReference>
<dbReference type="VEuPathDB" id="FungiDB:YPL141C"/>
<dbReference type="eggNOG" id="KOG0583">
    <property type="taxonomic scope" value="Eukaryota"/>
</dbReference>
<dbReference type="GeneTree" id="ENSGT00940000176459"/>
<dbReference type="HOGENOM" id="CLU_002888_1_2_1"/>
<dbReference type="InParanoid" id="Q03002"/>
<dbReference type="OMA" id="YRYITRT"/>
<dbReference type="OrthoDB" id="193931at2759"/>
<dbReference type="BioCyc" id="YEAST:G3O-34039-MONOMER"/>
<dbReference type="Reactome" id="R-SCE-1632852">
    <property type="pathway name" value="Macroautophagy"/>
</dbReference>
<dbReference type="Reactome" id="R-SCE-380972">
    <property type="pathway name" value="Energy dependent regulation of mTOR by LKB1-AMPK"/>
</dbReference>
<dbReference type="BioGRID-ORCS" id="855962">
    <property type="hits" value="0 hits in 13 CRISPR screens"/>
</dbReference>
<dbReference type="PRO" id="PR:Q03002"/>
<dbReference type="Proteomes" id="UP000002311">
    <property type="component" value="Chromosome XVI"/>
</dbReference>
<dbReference type="RNAct" id="Q03002">
    <property type="molecule type" value="protein"/>
</dbReference>
<dbReference type="GO" id="GO:0005938">
    <property type="term" value="C:cell cortex"/>
    <property type="evidence" value="ECO:0000318"/>
    <property type="project" value="GO_Central"/>
</dbReference>
<dbReference type="GO" id="GO:0005737">
    <property type="term" value="C:cytoplasm"/>
    <property type="evidence" value="ECO:0000314"/>
    <property type="project" value="SGD"/>
</dbReference>
<dbReference type="GO" id="GO:0005524">
    <property type="term" value="F:ATP binding"/>
    <property type="evidence" value="ECO:0007669"/>
    <property type="project" value="UniProtKB-KW"/>
</dbReference>
<dbReference type="GO" id="GO:0004672">
    <property type="term" value="F:protein kinase activity"/>
    <property type="evidence" value="ECO:0007005"/>
    <property type="project" value="SGD"/>
</dbReference>
<dbReference type="GO" id="GO:0106310">
    <property type="term" value="F:protein serine kinase activity"/>
    <property type="evidence" value="ECO:0007669"/>
    <property type="project" value="RHEA"/>
</dbReference>
<dbReference type="GO" id="GO:0004674">
    <property type="term" value="F:protein serine/threonine kinase activity"/>
    <property type="evidence" value="ECO:0000318"/>
    <property type="project" value="GO_Central"/>
</dbReference>
<dbReference type="GO" id="GO:0045033">
    <property type="term" value="P:peroxisome inheritance"/>
    <property type="evidence" value="ECO:0000316"/>
    <property type="project" value="SGD"/>
</dbReference>
<dbReference type="GO" id="GO:0000011">
    <property type="term" value="P:vacuole inheritance"/>
    <property type="evidence" value="ECO:0000316"/>
    <property type="project" value="SGD"/>
</dbReference>
<dbReference type="FunFam" id="1.10.510.10:FF:000397">
    <property type="entry name" value="Serine/threonine-protein kinase KIN4"/>
    <property type="match status" value="1"/>
</dbReference>
<dbReference type="Gene3D" id="1.10.510.10">
    <property type="entry name" value="Transferase(Phosphotransferase) domain 1"/>
    <property type="match status" value="1"/>
</dbReference>
<dbReference type="InterPro" id="IPR011009">
    <property type="entry name" value="Kinase-like_dom_sf"/>
</dbReference>
<dbReference type="InterPro" id="IPR000719">
    <property type="entry name" value="Prot_kinase_dom"/>
</dbReference>
<dbReference type="InterPro" id="IPR017441">
    <property type="entry name" value="Protein_kinase_ATP_BS"/>
</dbReference>
<dbReference type="InterPro" id="IPR008271">
    <property type="entry name" value="Ser/Thr_kinase_AS"/>
</dbReference>
<dbReference type="PANTHER" id="PTHR43895">
    <property type="entry name" value="CALCIUM/CALMODULIN-DEPENDENT PROTEIN KINASE KINASE-RELATED"/>
    <property type="match status" value="1"/>
</dbReference>
<dbReference type="PANTHER" id="PTHR43895:SF32">
    <property type="entry name" value="SERINE_THREONINE-PROTEIN KINASE CHK1"/>
    <property type="match status" value="1"/>
</dbReference>
<dbReference type="Pfam" id="PF00069">
    <property type="entry name" value="Pkinase"/>
    <property type="match status" value="1"/>
</dbReference>
<dbReference type="SMART" id="SM00220">
    <property type="entry name" value="S_TKc"/>
    <property type="match status" value="1"/>
</dbReference>
<dbReference type="SUPFAM" id="SSF56112">
    <property type="entry name" value="Protein kinase-like (PK-like)"/>
    <property type="match status" value="1"/>
</dbReference>
<dbReference type="PROSITE" id="PS00107">
    <property type="entry name" value="PROTEIN_KINASE_ATP"/>
    <property type="match status" value="1"/>
</dbReference>
<dbReference type="PROSITE" id="PS50011">
    <property type="entry name" value="PROTEIN_KINASE_DOM"/>
    <property type="match status" value="1"/>
</dbReference>
<dbReference type="PROSITE" id="PS00108">
    <property type="entry name" value="PROTEIN_KINASE_ST"/>
    <property type="match status" value="1"/>
</dbReference>
<sequence length="865" mass="97693">MSYTNKRHTYYGGFTNDLSDTFQYPQRTDEQRRKHVTFGPYILGSTLGEGEFGKVKLGWPKNFSNSSNSTFDFPKQVAIKLIKRDSISNDYRKEVKIYREINALKHLSHPNIVKLEEVLQNSRYIGIVLEYACGGEFYKYIQKKRRLKEMNACRLFSQLISGVHYIHSKGLVHRDLKLENLLLDKNENLVITDFGFVNEFCSRNELMKTSCGSPCYAAPELVISAEPYEARKADIWSCGVILYAILAGYLPWDDDPNNPEGSDIGRLYNYINSTPLKFPDYILPIPRDLLRRMLVSDPKKRINLKQIKKHEWLKPHSSFLSITPDEWDKLNNTQSVFRLAKPRRRYGSRPQSSCSTSSLGSRSDKRDSLVIDSTLITFPAPPQESQNHIITRPASIASDQRLSPIRRSNRHNRSNSAASVALQAVVNADREYVLSHEQSLSPVQNIRQTTGNMTASLSPPPAISPGDIIIETTPIKRNTISGSSIVPSLEEESSTTMQTSKIQPNNMASSQNHQYNKNKTQNSLQSAKNFYRTSSSSHTKPRPTSYHPGSYTTPPYNSNTLSIYEINEKAKSSASSQTLNQRDTSPFDSTPYLALDTCITSSSSIESSPKLITHGQFSVAKPSVDLQSVSGDLIKYKRDADVVTRIYDEKYKQKRKSLRYSGIFSDISCDTVTEESDELRPPESPLQQHEGQESIDKAKTEDTSEKGSKSSNIAKATAQKHVNNHLERSLNEAESTKKRFSFLSLYSYDTSKSSLYSSMDSKRKPSPPSQRRPKKDDSYQTNSKNHYITASNMQTSHQVSKDLPAPTMVQNKCTLETKKAVRSNRSSIMVSEVNKASVDNKAAQSPEHSTAKRVLGFFKRRSMKI</sequence>
<evidence type="ECO:0000250" key="1"/>
<evidence type="ECO:0000255" key="2">
    <source>
        <dbReference type="PROSITE-ProRule" id="PRU00159"/>
    </source>
</evidence>
<evidence type="ECO:0000255" key="3">
    <source>
        <dbReference type="PROSITE-ProRule" id="PRU10027"/>
    </source>
</evidence>
<evidence type="ECO:0000256" key="4">
    <source>
        <dbReference type="SAM" id="MobiDB-lite"/>
    </source>
</evidence>
<evidence type="ECO:0000269" key="5">
    <source>
    </source>
</evidence>
<evidence type="ECO:0000269" key="6">
    <source>
    </source>
</evidence>
<evidence type="ECO:0000269" key="7">
    <source>
    </source>
</evidence>
<evidence type="ECO:0007744" key="8">
    <source>
    </source>
</evidence>
<name>FRK1_YEAST</name>
<protein>
    <recommendedName>
        <fullName>Fatty acyl-CoA synthetase and RNA processing-associated kinase 1</fullName>
        <ecNumber>2.7.11.1</ecNumber>
    </recommendedName>
</protein>
<feature type="chain" id="PRO_0000234367" description="Fatty acyl-CoA synthetase and RNA processing-associated kinase 1">
    <location>
        <begin position="1"/>
        <end position="865"/>
    </location>
</feature>
<feature type="domain" description="Protein kinase" evidence="2">
    <location>
        <begin position="41"/>
        <end position="313"/>
    </location>
</feature>
<feature type="region of interest" description="Disordered" evidence="4">
    <location>
        <begin position="341"/>
        <end position="398"/>
    </location>
</feature>
<feature type="region of interest" description="Disordered" evidence="4">
    <location>
        <begin position="480"/>
        <end position="554"/>
    </location>
</feature>
<feature type="region of interest" description="Disordered" evidence="4">
    <location>
        <begin position="673"/>
        <end position="733"/>
    </location>
</feature>
<feature type="region of interest" description="Disordered" evidence="4">
    <location>
        <begin position="754"/>
        <end position="782"/>
    </location>
</feature>
<feature type="compositionally biased region" description="Low complexity" evidence="4">
    <location>
        <begin position="352"/>
        <end position="361"/>
    </location>
</feature>
<feature type="compositionally biased region" description="Polar residues" evidence="4">
    <location>
        <begin position="494"/>
        <end position="538"/>
    </location>
</feature>
<feature type="compositionally biased region" description="Basic and acidic residues" evidence="4">
    <location>
        <begin position="690"/>
        <end position="708"/>
    </location>
</feature>
<feature type="compositionally biased region" description="Basic and acidic residues" evidence="4">
    <location>
        <begin position="724"/>
        <end position="733"/>
    </location>
</feature>
<feature type="active site" description="Proton acceptor" evidence="2 3">
    <location>
        <position position="175"/>
    </location>
</feature>
<feature type="binding site" evidence="2">
    <location>
        <begin position="47"/>
        <end position="55"/>
    </location>
    <ligand>
        <name>ATP</name>
        <dbReference type="ChEBI" id="CHEBI:30616"/>
    </ligand>
</feature>
<feature type="binding site" evidence="2">
    <location>
        <position position="80"/>
    </location>
    <ligand>
        <name>ATP</name>
        <dbReference type="ChEBI" id="CHEBI:30616"/>
    </ligand>
</feature>
<feature type="modified residue" description="Phosphoserine" evidence="8">
    <location>
        <position position="441"/>
    </location>
</feature>
<proteinExistence type="evidence at protein level"/>
<keyword id="KW-0067">ATP-binding</keyword>
<keyword id="KW-0963">Cytoplasm</keyword>
<keyword id="KW-0418">Kinase</keyword>
<keyword id="KW-0547">Nucleotide-binding</keyword>
<keyword id="KW-0597">Phosphoprotein</keyword>
<keyword id="KW-1185">Reference proteome</keyword>
<keyword id="KW-0723">Serine/threonine-protein kinase</keyword>
<keyword id="KW-0808">Transferase</keyword>
<comment type="function">
    <text evidence="1">Putative serine/threonine-protein kinase that may be involved in rRNA transcription and ribosome biogenesis.</text>
</comment>
<comment type="catalytic activity">
    <reaction>
        <text>L-seryl-[protein] + ATP = O-phospho-L-seryl-[protein] + ADP + H(+)</text>
        <dbReference type="Rhea" id="RHEA:17989"/>
        <dbReference type="Rhea" id="RHEA-COMP:9863"/>
        <dbReference type="Rhea" id="RHEA-COMP:11604"/>
        <dbReference type="ChEBI" id="CHEBI:15378"/>
        <dbReference type="ChEBI" id="CHEBI:29999"/>
        <dbReference type="ChEBI" id="CHEBI:30616"/>
        <dbReference type="ChEBI" id="CHEBI:83421"/>
        <dbReference type="ChEBI" id="CHEBI:456216"/>
        <dbReference type="EC" id="2.7.11.1"/>
    </reaction>
</comment>
<comment type="catalytic activity">
    <reaction>
        <text>L-threonyl-[protein] + ATP = O-phospho-L-threonyl-[protein] + ADP + H(+)</text>
        <dbReference type="Rhea" id="RHEA:46608"/>
        <dbReference type="Rhea" id="RHEA-COMP:11060"/>
        <dbReference type="Rhea" id="RHEA-COMP:11605"/>
        <dbReference type="ChEBI" id="CHEBI:15378"/>
        <dbReference type="ChEBI" id="CHEBI:30013"/>
        <dbReference type="ChEBI" id="CHEBI:30616"/>
        <dbReference type="ChEBI" id="CHEBI:61977"/>
        <dbReference type="ChEBI" id="CHEBI:456216"/>
        <dbReference type="EC" id="2.7.11.1"/>
    </reaction>
</comment>
<comment type="subunit">
    <text evidence="7">Interacts with FAA3, POL5 and TPA1.</text>
</comment>
<comment type="subcellular location">
    <subcellularLocation>
        <location evidence="5">Cytoplasm</location>
    </subcellularLocation>
</comment>
<comment type="miscellaneous">
    <text evidence="6">Present with 556 molecules/cell in log phase SD medium.</text>
</comment>
<comment type="similarity">
    <text evidence="2">Belongs to the protein kinase superfamily. Ser/Thr protein kinase family.</text>
</comment>
<accession>Q03002</accession>
<accession>D6W3M7</accession>
<reference key="1">
    <citation type="journal article" date="1997" name="Nature">
        <title>The nucleotide sequence of Saccharomyces cerevisiae chromosome XVI.</title>
        <authorList>
            <person name="Bussey H."/>
            <person name="Storms R.K."/>
            <person name="Ahmed A."/>
            <person name="Albermann K."/>
            <person name="Allen E."/>
            <person name="Ansorge W."/>
            <person name="Araujo R."/>
            <person name="Aparicio A."/>
            <person name="Barrell B.G."/>
            <person name="Badcock K."/>
            <person name="Benes V."/>
            <person name="Botstein D."/>
            <person name="Bowman S."/>
            <person name="Brueckner M."/>
            <person name="Carpenter J."/>
            <person name="Cherry J.M."/>
            <person name="Chung E."/>
            <person name="Churcher C.M."/>
            <person name="Coster F."/>
            <person name="Davis K."/>
            <person name="Davis R.W."/>
            <person name="Dietrich F.S."/>
            <person name="Delius H."/>
            <person name="DiPaolo T."/>
            <person name="Dubois E."/>
            <person name="Duesterhoeft A."/>
            <person name="Duncan M."/>
            <person name="Floeth M."/>
            <person name="Fortin N."/>
            <person name="Friesen J.D."/>
            <person name="Fritz C."/>
            <person name="Goffeau A."/>
            <person name="Hall J."/>
            <person name="Hebling U."/>
            <person name="Heumann K."/>
            <person name="Hilbert H."/>
            <person name="Hillier L.W."/>
            <person name="Hunicke-Smith S."/>
            <person name="Hyman R.W."/>
            <person name="Johnston M."/>
            <person name="Kalman S."/>
            <person name="Kleine K."/>
            <person name="Komp C."/>
            <person name="Kurdi O."/>
            <person name="Lashkari D."/>
            <person name="Lew H."/>
            <person name="Lin A."/>
            <person name="Lin D."/>
            <person name="Louis E.J."/>
            <person name="Marathe R."/>
            <person name="Messenguy F."/>
            <person name="Mewes H.-W."/>
            <person name="Mirtipati S."/>
            <person name="Moestl D."/>
            <person name="Mueller-Auer S."/>
            <person name="Namath A."/>
            <person name="Nentwich U."/>
            <person name="Oefner P."/>
            <person name="Pearson D."/>
            <person name="Petel F.X."/>
            <person name="Pohl T.M."/>
            <person name="Purnelle B."/>
            <person name="Rajandream M.A."/>
            <person name="Rechmann S."/>
            <person name="Rieger M."/>
            <person name="Riles L."/>
            <person name="Roberts D."/>
            <person name="Schaefer M."/>
            <person name="Scharfe M."/>
            <person name="Scherens B."/>
            <person name="Schramm S."/>
            <person name="Schroeder M."/>
            <person name="Sdicu A.-M."/>
            <person name="Tettelin H."/>
            <person name="Urrestarazu L.A."/>
            <person name="Ushinsky S."/>
            <person name="Vierendeels F."/>
            <person name="Vissers S."/>
            <person name="Voss H."/>
            <person name="Walsh S.V."/>
            <person name="Wambutt R."/>
            <person name="Wang Y."/>
            <person name="Wedler E."/>
            <person name="Wedler H."/>
            <person name="Winnett E."/>
            <person name="Zhong W.-W."/>
            <person name="Zollner A."/>
            <person name="Vo D.H."/>
            <person name="Hani J."/>
        </authorList>
    </citation>
    <scope>NUCLEOTIDE SEQUENCE [LARGE SCALE GENOMIC DNA]</scope>
    <source>
        <strain>ATCC 204508 / S288c</strain>
    </source>
</reference>
<reference key="2">
    <citation type="journal article" date="2014" name="G3 (Bethesda)">
        <title>The reference genome sequence of Saccharomyces cerevisiae: Then and now.</title>
        <authorList>
            <person name="Engel S.R."/>
            <person name="Dietrich F.S."/>
            <person name="Fisk D.G."/>
            <person name="Binkley G."/>
            <person name="Balakrishnan R."/>
            <person name="Costanzo M.C."/>
            <person name="Dwight S.S."/>
            <person name="Hitz B.C."/>
            <person name="Karra K."/>
            <person name="Nash R.S."/>
            <person name="Weng S."/>
            <person name="Wong E.D."/>
            <person name="Lloyd P."/>
            <person name="Skrzypek M.S."/>
            <person name="Miyasato S.R."/>
            <person name="Simison M."/>
            <person name="Cherry J.M."/>
        </authorList>
    </citation>
    <scope>GENOME REANNOTATION</scope>
    <source>
        <strain>ATCC 204508 / S288c</strain>
    </source>
</reference>
<reference key="3">
    <citation type="journal article" date="2003" name="Nature">
        <title>Global analysis of protein localization in budding yeast.</title>
        <authorList>
            <person name="Huh W.-K."/>
            <person name="Falvo J.V."/>
            <person name="Gerke L.C."/>
            <person name="Carroll A.S."/>
            <person name="Howson R.W."/>
            <person name="Weissman J.S."/>
            <person name="O'Shea E.K."/>
        </authorList>
    </citation>
    <scope>SUBCELLULAR LOCATION [LARGE SCALE ANALYSIS]</scope>
</reference>
<reference key="4">
    <citation type="journal article" date="2003" name="Nature">
        <title>Global analysis of protein expression in yeast.</title>
        <authorList>
            <person name="Ghaemmaghami S."/>
            <person name="Huh W.-K."/>
            <person name="Bower K."/>
            <person name="Howson R.W."/>
            <person name="Belle A."/>
            <person name="Dephoure N."/>
            <person name="O'Shea E.K."/>
            <person name="Weissman J.S."/>
        </authorList>
    </citation>
    <scope>LEVEL OF PROTEIN EXPRESSION [LARGE SCALE ANALYSIS]</scope>
</reference>
<reference key="5">
    <citation type="journal article" date="2008" name="Mol. Cell. Proteomics">
        <title>A multidimensional chromatography technology for in-depth phosphoproteome analysis.</title>
        <authorList>
            <person name="Albuquerque C.P."/>
            <person name="Smolka M.B."/>
            <person name="Payne S.H."/>
            <person name="Bafna V."/>
            <person name="Eng J."/>
            <person name="Zhou H."/>
        </authorList>
    </citation>
    <scope>IDENTIFICATION BY MASS SPECTROMETRY [LARGE SCALE ANALYSIS]</scope>
</reference>
<reference key="6">
    <citation type="journal article" date="2009" name="Science">
        <title>Global analysis of Cdk1 substrate phosphorylation sites provides insights into evolution.</title>
        <authorList>
            <person name="Holt L.J."/>
            <person name="Tuch B.B."/>
            <person name="Villen J."/>
            <person name="Johnson A.D."/>
            <person name="Gygi S.P."/>
            <person name="Morgan D.O."/>
        </authorList>
    </citation>
    <scope>PHOSPHORYLATION [LARGE SCALE ANALYSIS] AT SER-441</scope>
    <scope>IDENTIFICATION BY MASS SPECTROMETRY [LARGE SCALE ANALYSIS]</scope>
</reference>
<reference key="7">
    <citation type="journal article" date="2010" name="Science">
        <title>A global protein kinase and phosphatase interaction network in yeast.</title>
        <authorList>
            <person name="Breitkreutz A."/>
            <person name="Choi H."/>
            <person name="Sharom J.R."/>
            <person name="Boucher L."/>
            <person name="Neduva V."/>
            <person name="Larsen B."/>
            <person name="Lin Z.Y."/>
            <person name="Breitkreutz B.J."/>
            <person name="Stark C."/>
            <person name="Liu G."/>
            <person name="Ahn J."/>
            <person name="Dewar-Darch D."/>
            <person name="Reguly T."/>
            <person name="Tang X."/>
            <person name="Almeida R."/>
            <person name="Qin Z.S."/>
            <person name="Pawson T."/>
            <person name="Gingras A.C."/>
            <person name="Nesvizhskii A.I."/>
            <person name="Tyers M."/>
        </authorList>
    </citation>
    <scope>INTERACTION WITH FAA3; POL5 AND TPA1</scope>
</reference>